<name>PSD_VIBVY</name>
<organism>
    <name type="scientific">Vibrio vulnificus (strain YJ016)</name>
    <dbReference type="NCBI Taxonomy" id="196600"/>
    <lineage>
        <taxon>Bacteria</taxon>
        <taxon>Pseudomonadati</taxon>
        <taxon>Pseudomonadota</taxon>
        <taxon>Gammaproteobacteria</taxon>
        <taxon>Vibrionales</taxon>
        <taxon>Vibrionaceae</taxon>
        <taxon>Vibrio</taxon>
    </lineage>
</organism>
<dbReference type="EC" id="4.1.1.65" evidence="1"/>
<dbReference type="EMBL" id="BA000037">
    <property type="protein sequence ID" value="BAC95843.1"/>
    <property type="molecule type" value="Genomic_DNA"/>
</dbReference>
<dbReference type="SMR" id="Q7MGZ5"/>
<dbReference type="STRING" id="672.VV93_v1c28070"/>
<dbReference type="KEGG" id="vvy:VV3079"/>
<dbReference type="PATRIC" id="fig|196600.6.peg.3056"/>
<dbReference type="eggNOG" id="COG0688">
    <property type="taxonomic scope" value="Bacteria"/>
</dbReference>
<dbReference type="HOGENOM" id="CLU_029061_4_1_6"/>
<dbReference type="UniPathway" id="UPA00558">
    <property type="reaction ID" value="UER00616"/>
</dbReference>
<dbReference type="Proteomes" id="UP000002675">
    <property type="component" value="Chromosome I"/>
</dbReference>
<dbReference type="GO" id="GO:0005886">
    <property type="term" value="C:plasma membrane"/>
    <property type="evidence" value="ECO:0007669"/>
    <property type="project" value="UniProtKB-SubCell"/>
</dbReference>
<dbReference type="GO" id="GO:0004609">
    <property type="term" value="F:phosphatidylserine decarboxylase activity"/>
    <property type="evidence" value="ECO:0007669"/>
    <property type="project" value="UniProtKB-UniRule"/>
</dbReference>
<dbReference type="GO" id="GO:0006646">
    <property type="term" value="P:phosphatidylethanolamine biosynthetic process"/>
    <property type="evidence" value="ECO:0007669"/>
    <property type="project" value="UniProtKB-UniRule"/>
</dbReference>
<dbReference type="HAMAP" id="MF_00662">
    <property type="entry name" value="PS_decarb_PSD_B_type1"/>
    <property type="match status" value="1"/>
</dbReference>
<dbReference type="InterPro" id="IPR003817">
    <property type="entry name" value="PS_Dcarbxylase"/>
</dbReference>
<dbReference type="InterPro" id="IPR033177">
    <property type="entry name" value="PSD-B"/>
</dbReference>
<dbReference type="InterPro" id="IPR033178">
    <property type="entry name" value="PSD_type1_pro"/>
</dbReference>
<dbReference type="NCBIfam" id="TIGR00163">
    <property type="entry name" value="PS_decarb"/>
    <property type="match status" value="1"/>
</dbReference>
<dbReference type="PANTHER" id="PTHR10067">
    <property type="entry name" value="PHOSPHATIDYLSERINE DECARBOXYLASE"/>
    <property type="match status" value="1"/>
</dbReference>
<dbReference type="PANTHER" id="PTHR10067:SF6">
    <property type="entry name" value="PHOSPHATIDYLSERINE DECARBOXYLASE PROENZYME, MITOCHONDRIAL"/>
    <property type="match status" value="1"/>
</dbReference>
<dbReference type="Pfam" id="PF02666">
    <property type="entry name" value="PS_Dcarbxylase"/>
    <property type="match status" value="1"/>
</dbReference>
<keyword id="KW-1003">Cell membrane</keyword>
<keyword id="KW-0210">Decarboxylase</keyword>
<keyword id="KW-0444">Lipid biosynthesis</keyword>
<keyword id="KW-0443">Lipid metabolism</keyword>
<keyword id="KW-0456">Lyase</keyword>
<keyword id="KW-0472">Membrane</keyword>
<keyword id="KW-0594">Phospholipid biosynthesis</keyword>
<keyword id="KW-1208">Phospholipid metabolism</keyword>
<keyword id="KW-0670">Pyruvate</keyword>
<keyword id="KW-0865">Zymogen</keyword>
<protein>
    <recommendedName>
        <fullName evidence="1">Phosphatidylserine decarboxylase proenzyme</fullName>
        <ecNumber evidence="1">4.1.1.65</ecNumber>
    </recommendedName>
    <component>
        <recommendedName>
            <fullName evidence="1">Phosphatidylserine decarboxylase alpha chain</fullName>
        </recommendedName>
    </component>
    <component>
        <recommendedName>
            <fullName evidence="1">Phosphatidylserine decarboxylase beta chain</fullName>
        </recommendedName>
    </component>
</protein>
<comment type="function">
    <text evidence="1">Catalyzes the formation of phosphatidylethanolamine (PtdEtn) from phosphatidylserine (PtdSer).</text>
</comment>
<comment type="catalytic activity">
    <reaction evidence="1">
        <text>a 1,2-diacyl-sn-glycero-3-phospho-L-serine + H(+) = a 1,2-diacyl-sn-glycero-3-phosphoethanolamine + CO2</text>
        <dbReference type="Rhea" id="RHEA:20828"/>
        <dbReference type="ChEBI" id="CHEBI:15378"/>
        <dbReference type="ChEBI" id="CHEBI:16526"/>
        <dbReference type="ChEBI" id="CHEBI:57262"/>
        <dbReference type="ChEBI" id="CHEBI:64612"/>
        <dbReference type="EC" id="4.1.1.65"/>
    </reaction>
</comment>
<comment type="cofactor">
    <cofactor evidence="1">
        <name>pyruvate</name>
        <dbReference type="ChEBI" id="CHEBI:15361"/>
    </cofactor>
    <text evidence="1">Binds 1 pyruvoyl group covalently per subunit.</text>
</comment>
<comment type="pathway">
    <text evidence="1">Phospholipid metabolism; phosphatidylethanolamine biosynthesis; phosphatidylethanolamine from CDP-diacylglycerol: step 2/2.</text>
</comment>
<comment type="subunit">
    <text evidence="1">Heterodimer of a large membrane-associated beta subunit and a small pyruvoyl-containing alpha subunit.</text>
</comment>
<comment type="subcellular location">
    <subcellularLocation>
        <location evidence="1">Cell membrane</location>
        <topology evidence="1">Peripheral membrane protein</topology>
    </subcellularLocation>
</comment>
<comment type="PTM">
    <text evidence="1">Is synthesized initially as an inactive proenzyme. Formation of the active enzyme involves a self-maturation process in which the active site pyruvoyl group is generated from an internal serine residue via an autocatalytic post-translational modification. Two non-identical subunits are generated from the proenzyme in this reaction, and the pyruvate is formed at the N-terminus of the alpha chain, which is derived from the carboxyl end of the proenzyme. The autoendoproteolytic cleavage occurs by a canonical serine protease mechanism, in which the side chain hydroxyl group of the serine supplies its oxygen atom to form the C-terminus of the beta chain, while the remainder of the serine residue undergoes an oxidative deamination to produce ammonia and the pyruvoyl prosthetic group on the alpha chain. During this reaction, the Ser that is part of the protease active site of the proenzyme becomes the pyruvoyl prosthetic group, which constitutes an essential element of the active site of the mature decarboxylase.</text>
</comment>
<comment type="similarity">
    <text evidence="1">Belongs to the phosphatidylserine decarboxylase family. PSD-B subfamily. Prokaryotic type I sub-subfamily.</text>
</comment>
<sequence length="285" mass="31486">MDKIKVGLQYWIPQHGLTRLVGKLASAKAGSLTTAIIRWFIKQYNVNMDEAKHADPKHYKTFNEFFVRELKEGARPIAEGDAIITHPADACVSQFGPITNGQLIQAKGHDFSAQELLGGDAALAEEFKDGSFATLYLSPRDYHRVHMPCDGTLRQMIYVPGDLFSVNPLTAENVPNLFARNERVVCIFDTEFGPMAQVLVGATIVGSIEQVWAGTITPPRGNTVYKWDYPASGNHAVILKKGEEMGRFKLGSTVINLFAKDAIRFDESMANGQPTVMGTPYAHQQ</sequence>
<feature type="chain" id="PRO_0000029709" description="Phosphatidylserine decarboxylase beta chain" evidence="1">
    <location>
        <begin position="1"/>
        <end position="251"/>
    </location>
</feature>
<feature type="chain" id="PRO_0000029710" description="Phosphatidylserine decarboxylase alpha chain" evidence="1">
    <location>
        <begin position="252"/>
        <end position="285"/>
    </location>
</feature>
<feature type="active site" description="Charge relay system; for autoendoproteolytic cleavage activity" evidence="1">
    <location>
        <position position="89"/>
    </location>
</feature>
<feature type="active site" description="Charge relay system; for autoendoproteolytic cleavage activity" evidence="1">
    <location>
        <position position="146"/>
    </location>
</feature>
<feature type="active site" description="Charge relay system; for autoendoproteolytic cleavage activity" evidence="1">
    <location>
        <position position="252"/>
    </location>
</feature>
<feature type="active site" description="Schiff-base intermediate with substrate; via pyruvic acid; for decarboxylase activity" evidence="1">
    <location>
        <position position="252"/>
    </location>
</feature>
<feature type="site" description="Cleavage (non-hydrolytic); by autocatalysis" evidence="1">
    <location>
        <begin position="251"/>
        <end position="252"/>
    </location>
</feature>
<feature type="modified residue" description="Pyruvic acid (Ser); by autocatalysis" evidence="1">
    <location>
        <position position="252"/>
    </location>
</feature>
<proteinExistence type="inferred from homology"/>
<evidence type="ECO:0000255" key="1">
    <source>
        <dbReference type="HAMAP-Rule" id="MF_00662"/>
    </source>
</evidence>
<reference key="1">
    <citation type="journal article" date="2003" name="Genome Res.">
        <title>Comparative genome analysis of Vibrio vulnificus, a marine pathogen.</title>
        <authorList>
            <person name="Chen C.-Y."/>
            <person name="Wu K.-M."/>
            <person name="Chang Y.-C."/>
            <person name="Chang C.-H."/>
            <person name="Tsai H.-C."/>
            <person name="Liao T.-L."/>
            <person name="Liu Y.-M."/>
            <person name="Chen H.-J."/>
            <person name="Shen A.B.-T."/>
            <person name="Li J.-C."/>
            <person name="Su T.-L."/>
            <person name="Shao C.-P."/>
            <person name="Lee C.-T."/>
            <person name="Hor L.-I."/>
            <person name="Tsai S.-F."/>
        </authorList>
    </citation>
    <scope>NUCLEOTIDE SEQUENCE [LARGE SCALE GENOMIC DNA]</scope>
    <source>
        <strain>YJ016</strain>
    </source>
</reference>
<accession>Q7MGZ5</accession>
<gene>
    <name evidence="1" type="primary">psd</name>
    <name type="ordered locus">VV3079</name>
</gene>